<dbReference type="EC" id="2.7.4.6" evidence="1"/>
<dbReference type="EMBL" id="AM233362">
    <property type="protein sequence ID" value="CAJ79749.1"/>
    <property type="molecule type" value="Genomic_DNA"/>
</dbReference>
<dbReference type="RefSeq" id="WP_003016495.1">
    <property type="nucleotide sequence ID" value="NZ_CP009694.1"/>
</dbReference>
<dbReference type="SMR" id="Q2A2S1"/>
<dbReference type="GeneID" id="75264230"/>
<dbReference type="KEGG" id="ftl:FTL_1310"/>
<dbReference type="Proteomes" id="UP000001944">
    <property type="component" value="Chromosome"/>
</dbReference>
<dbReference type="GO" id="GO:0005737">
    <property type="term" value="C:cytoplasm"/>
    <property type="evidence" value="ECO:0007669"/>
    <property type="project" value="UniProtKB-SubCell"/>
</dbReference>
<dbReference type="GO" id="GO:0005524">
    <property type="term" value="F:ATP binding"/>
    <property type="evidence" value="ECO:0007669"/>
    <property type="project" value="UniProtKB-UniRule"/>
</dbReference>
<dbReference type="GO" id="GO:0046872">
    <property type="term" value="F:metal ion binding"/>
    <property type="evidence" value="ECO:0007669"/>
    <property type="project" value="UniProtKB-KW"/>
</dbReference>
<dbReference type="GO" id="GO:0004550">
    <property type="term" value="F:nucleoside diphosphate kinase activity"/>
    <property type="evidence" value="ECO:0007669"/>
    <property type="project" value="UniProtKB-UniRule"/>
</dbReference>
<dbReference type="GO" id="GO:0006241">
    <property type="term" value="P:CTP biosynthetic process"/>
    <property type="evidence" value="ECO:0007669"/>
    <property type="project" value="UniProtKB-UniRule"/>
</dbReference>
<dbReference type="GO" id="GO:0006183">
    <property type="term" value="P:GTP biosynthetic process"/>
    <property type="evidence" value="ECO:0007669"/>
    <property type="project" value="UniProtKB-UniRule"/>
</dbReference>
<dbReference type="GO" id="GO:0006228">
    <property type="term" value="P:UTP biosynthetic process"/>
    <property type="evidence" value="ECO:0007669"/>
    <property type="project" value="UniProtKB-UniRule"/>
</dbReference>
<dbReference type="CDD" id="cd04413">
    <property type="entry name" value="NDPk_I"/>
    <property type="match status" value="1"/>
</dbReference>
<dbReference type="FunFam" id="3.30.70.141:FF:000001">
    <property type="entry name" value="Nucleoside diphosphate kinase"/>
    <property type="match status" value="1"/>
</dbReference>
<dbReference type="Gene3D" id="3.30.70.141">
    <property type="entry name" value="Nucleoside diphosphate kinase-like domain"/>
    <property type="match status" value="1"/>
</dbReference>
<dbReference type="HAMAP" id="MF_00451">
    <property type="entry name" value="NDP_kinase"/>
    <property type="match status" value="1"/>
</dbReference>
<dbReference type="InterPro" id="IPR034907">
    <property type="entry name" value="NDK-like_dom"/>
</dbReference>
<dbReference type="InterPro" id="IPR036850">
    <property type="entry name" value="NDK-like_dom_sf"/>
</dbReference>
<dbReference type="InterPro" id="IPR001564">
    <property type="entry name" value="Nucleoside_diP_kinase"/>
</dbReference>
<dbReference type="InterPro" id="IPR023005">
    <property type="entry name" value="Nucleoside_diP_kinase_AS"/>
</dbReference>
<dbReference type="NCBIfam" id="NF001908">
    <property type="entry name" value="PRK00668.1"/>
    <property type="match status" value="1"/>
</dbReference>
<dbReference type="PANTHER" id="PTHR46161">
    <property type="entry name" value="NUCLEOSIDE DIPHOSPHATE KINASE"/>
    <property type="match status" value="1"/>
</dbReference>
<dbReference type="PANTHER" id="PTHR46161:SF3">
    <property type="entry name" value="NUCLEOSIDE DIPHOSPHATE KINASE DDB_G0292928-RELATED"/>
    <property type="match status" value="1"/>
</dbReference>
<dbReference type="Pfam" id="PF00334">
    <property type="entry name" value="NDK"/>
    <property type="match status" value="1"/>
</dbReference>
<dbReference type="PRINTS" id="PR01243">
    <property type="entry name" value="NUCDPKINASE"/>
</dbReference>
<dbReference type="SMART" id="SM00562">
    <property type="entry name" value="NDK"/>
    <property type="match status" value="1"/>
</dbReference>
<dbReference type="SUPFAM" id="SSF54919">
    <property type="entry name" value="Nucleoside diphosphate kinase, NDK"/>
    <property type="match status" value="1"/>
</dbReference>
<dbReference type="PROSITE" id="PS00469">
    <property type="entry name" value="NDPK"/>
    <property type="match status" value="1"/>
</dbReference>
<dbReference type="PROSITE" id="PS51374">
    <property type="entry name" value="NDPK_LIKE"/>
    <property type="match status" value="1"/>
</dbReference>
<name>NDK_FRATH</name>
<proteinExistence type="inferred from homology"/>
<comment type="function">
    <text evidence="1">Major role in the synthesis of nucleoside triphosphates other than ATP. The ATP gamma phosphate is transferred to the NDP beta phosphate via a ping-pong mechanism, using a phosphorylated active-site intermediate.</text>
</comment>
<comment type="catalytic activity">
    <reaction evidence="1">
        <text>a 2'-deoxyribonucleoside 5'-diphosphate + ATP = a 2'-deoxyribonucleoside 5'-triphosphate + ADP</text>
        <dbReference type="Rhea" id="RHEA:44640"/>
        <dbReference type="ChEBI" id="CHEBI:30616"/>
        <dbReference type="ChEBI" id="CHEBI:61560"/>
        <dbReference type="ChEBI" id="CHEBI:73316"/>
        <dbReference type="ChEBI" id="CHEBI:456216"/>
        <dbReference type="EC" id="2.7.4.6"/>
    </reaction>
</comment>
<comment type="catalytic activity">
    <reaction evidence="1">
        <text>a ribonucleoside 5'-diphosphate + ATP = a ribonucleoside 5'-triphosphate + ADP</text>
        <dbReference type="Rhea" id="RHEA:18113"/>
        <dbReference type="ChEBI" id="CHEBI:30616"/>
        <dbReference type="ChEBI" id="CHEBI:57930"/>
        <dbReference type="ChEBI" id="CHEBI:61557"/>
        <dbReference type="ChEBI" id="CHEBI:456216"/>
        <dbReference type="EC" id="2.7.4.6"/>
    </reaction>
</comment>
<comment type="cofactor">
    <cofactor evidence="1">
        <name>Mg(2+)</name>
        <dbReference type="ChEBI" id="CHEBI:18420"/>
    </cofactor>
</comment>
<comment type="subunit">
    <text evidence="1">Homotetramer.</text>
</comment>
<comment type="subcellular location">
    <subcellularLocation>
        <location evidence="1">Cytoplasm</location>
    </subcellularLocation>
</comment>
<comment type="similarity">
    <text evidence="1">Belongs to the NDK family.</text>
</comment>
<feature type="chain" id="PRO_0000242498" description="Nucleoside diphosphate kinase">
    <location>
        <begin position="1"/>
        <end position="140"/>
    </location>
</feature>
<feature type="active site" description="Pros-phosphohistidine intermediate" evidence="1">
    <location>
        <position position="117"/>
    </location>
</feature>
<feature type="binding site" evidence="1">
    <location>
        <position position="11"/>
    </location>
    <ligand>
        <name>ATP</name>
        <dbReference type="ChEBI" id="CHEBI:30616"/>
    </ligand>
</feature>
<feature type="binding site" evidence="1">
    <location>
        <position position="59"/>
    </location>
    <ligand>
        <name>ATP</name>
        <dbReference type="ChEBI" id="CHEBI:30616"/>
    </ligand>
</feature>
<feature type="binding site" evidence="1">
    <location>
        <position position="87"/>
    </location>
    <ligand>
        <name>ATP</name>
        <dbReference type="ChEBI" id="CHEBI:30616"/>
    </ligand>
</feature>
<feature type="binding site" evidence="1">
    <location>
        <position position="93"/>
    </location>
    <ligand>
        <name>ATP</name>
        <dbReference type="ChEBI" id="CHEBI:30616"/>
    </ligand>
</feature>
<feature type="binding site" evidence="1">
    <location>
        <position position="104"/>
    </location>
    <ligand>
        <name>ATP</name>
        <dbReference type="ChEBI" id="CHEBI:30616"/>
    </ligand>
</feature>
<feature type="binding site" evidence="1">
    <location>
        <position position="114"/>
    </location>
    <ligand>
        <name>ATP</name>
        <dbReference type="ChEBI" id="CHEBI:30616"/>
    </ligand>
</feature>
<organism>
    <name type="scientific">Francisella tularensis subsp. holarctica (strain LVS)</name>
    <dbReference type="NCBI Taxonomy" id="376619"/>
    <lineage>
        <taxon>Bacteria</taxon>
        <taxon>Pseudomonadati</taxon>
        <taxon>Pseudomonadota</taxon>
        <taxon>Gammaproteobacteria</taxon>
        <taxon>Thiotrichales</taxon>
        <taxon>Francisellaceae</taxon>
        <taxon>Francisella</taxon>
    </lineage>
</organism>
<reference key="1">
    <citation type="submission" date="2006-03" db="EMBL/GenBank/DDBJ databases">
        <title>Complete genome sequence of Francisella tularensis LVS (Live Vaccine Strain).</title>
        <authorList>
            <person name="Chain P."/>
            <person name="Larimer F."/>
            <person name="Land M."/>
            <person name="Stilwagen S."/>
            <person name="Larsson P."/>
            <person name="Bearden S."/>
            <person name="Chu M."/>
            <person name="Oyston P."/>
            <person name="Forsman M."/>
            <person name="Andersson S."/>
            <person name="Lindler L."/>
            <person name="Titball R."/>
            <person name="Garcia E."/>
        </authorList>
    </citation>
    <scope>NUCLEOTIDE SEQUENCE [LARGE SCALE GENOMIC DNA]</scope>
    <source>
        <strain>LVS</strain>
    </source>
</reference>
<protein>
    <recommendedName>
        <fullName evidence="1">Nucleoside diphosphate kinase</fullName>
        <shortName evidence="1">NDK</shortName>
        <shortName evidence="1">NDP kinase</shortName>
        <ecNumber evidence="1">2.7.4.6</ecNumber>
    </recommendedName>
    <alternativeName>
        <fullName evidence="1">Nucleoside-2-P kinase</fullName>
    </alternativeName>
</protein>
<sequence length="140" mass="15428">MTKQRTLSIIKPDAVEKNVIGEIYSRFEKAGLRIIAAKMKHLSKAEAEGFYAVHKDRPFFSALVEFMISGPVMIQVLEGENAIAKNRELMGATNPKEAKAGTIRADFADSIDANAVHGSDAEDTAAQEIRYFFSDTEIFG</sequence>
<accession>Q2A2S1</accession>
<keyword id="KW-0067">ATP-binding</keyword>
<keyword id="KW-0963">Cytoplasm</keyword>
<keyword id="KW-0418">Kinase</keyword>
<keyword id="KW-0460">Magnesium</keyword>
<keyword id="KW-0479">Metal-binding</keyword>
<keyword id="KW-0546">Nucleotide metabolism</keyword>
<keyword id="KW-0547">Nucleotide-binding</keyword>
<keyword id="KW-0597">Phosphoprotein</keyword>
<keyword id="KW-1185">Reference proteome</keyword>
<keyword id="KW-0808">Transferase</keyword>
<gene>
    <name evidence="1" type="primary">ndk</name>
    <name type="ordered locus">FTL_1310</name>
</gene>
<evidence type="ECO:0000255" key="1">
    <source>
        <dbReference type="HAMAP-Rule" id="MF_00451"/>
    </source>
</evidence>